<proteinExistence type="inferred from homology"/>
<protein>
    <recommendedName>
        <fullName evidence="1">Small ribosomal subunit protein uS5</fullName>
    </recommendedName>
    <alternativeName>
        <fullName evidence="2">30S ribosomal protein S5</fullName>
    </alternativeName>
</protein>
<name>RS5_STAAE</name>
<comment type="function">
    <text evidence="1">With S4 and S12 plays an important role in translational accuracy.</text>
</comment>
<comment type="function">
    <text evidence="1">Located at the back of the 30S subunit body where it stabilizes the conformation of the head with respect to the body.</text>
</comment>
<comment type="subunit">
    <text evidence="1">Part of the 30S ribosomal subunit. Contacts proteins S4 and S8.</text>
</comment>
<comment type="domain">
    <text>The N-terminal domain interacts with the head of the 30S subunit; the C-terminal domain interacts with the body and contacts protein S4. The interaction surface between S4 and S5 is involved in control of translational fidelity.</text>
</comment>
<comment type="similarity">
    <text evidence="1">Belongs to the universal ribosomal protein uS5 family.</text>
</comment>
<accession>A6QJ75</accession>
<sequence length="163" mass="17352">MARREEETKEFEERVVTINRVAKVVKGGRRFRFTALVVVGDKNGRVGFGTGKAQEVPEAIKKAVEAAKKDLVVVPRVEGTTPHTITGRYGSGSVFMKPAAPGTGVIAGGPVRAVLELAGITDILSKSLGSNTPINMVRATIDGLQNLKNAEDVAKLRGKTVEE</sequence>
<organism>
    <name type="scientific">Staphylococcus aureus (strain Newman)</name>
    <dbReference type="NCBI Taxonomy" id="426430"/>
    <lineage>
        <taxon>Bacteria</taxon>
        <taxon>Bacillati</taxon>
        <taxon>Bacillota</taxon>
        <taxon>Bacilli</taxon>
        <taxon>Bacillales</taxon>
        <taxon>Staphylococcaceae</taxon>
        <taxon>Staphylococcus</taxon>
    </lineage>
</organism>
<reference key="1">
    <citation type="journal article" date="2008" name="J. Bacteriol.">
        <title>Genome sequence of Staphylococcus aureus strain Newman and comparative analysis of staphylococcal genomes: polymorphism and evolution of two major pathogenicity islands.</title>
        <authorList>
            <person name="Baba T."/>
            <person name="Bae T."/>
            <person name="Schneewind O."/>
            <person name="Takeuchi F."/>
            <person name="Hiramatsu K."/>
        </authorList>
    </citation>
    <scope>NUCLEOTIDE SEQUENCE [LARGE SCALE GENOMIC DNA]</scope>
    <source>
        <strain>Newman</strain>
    </source>
</reference>
<gene>
    <name evidence="1" type="primary">rpsE</name>
    <name type="ordered locus">NWMN_2135</name>
</gene>
<keyword id="KW-0687">Ribonucleoprotein</keyword>
<keyword id="KW-0689">Ribosomal protein</keyword>
<keyword id="KW-0694">RNA-binding</keyword>
<keyword id="KW-0699">rRNA-binding</keyword>
<dbReference type="EMBL" id="AP009351">
    <property type="protein sequence ID" value="BAF68407.1"/>
    <property type="molecule type" value="Genomic_DNA"/>
</dbReference>
<dbReference type="RefSeq" id="WP_000113850.1">
    <property type="nucleotide sequence ID" value="NC_009641.1"/>
</dbReference>
<dbReference type="SMR" id="A6QJ75"/>
<dbReference type="KEGG" id="sae:NWMN_2135"/>
<dbReference type="HOGENOM" id="CLU_065898_2_2_9"/>
<dbReference type="Proteomes" id="UP000006386">
    <property type="component" value="Chromosome"/>
</dbReference>
<dbReference type="GO" id="GO:0015935">
    <property type="term" value="C:small ribosomal subunit"/>
    <property type="evidence" value="ECO:0007669"/>
    <property type="project" value="InterPro"/>
</dbReference>
<dbReference type="GO" id="GO:0019843">
    <property type="term" value="F:rRNA binding"/>
    <property type="evidence" value="ECO:0007669"/>
    <property type="project" value="UniProtKB-UniRule"/>
</dbReference>
<dbReference type="GO" id="GO:0003735">
    <property type="term" value="F:structural constituent of ribosome"/>
    <property type="evidence" value="ECO:0007669"/>
    <property type="project" value="InterPro"/>
</dbReference>
<dbReference type="GO" id="GO:0006412">
    <property type="term" value="P:translation"/>
    <property type="evidence" value="ECO:0007669"/>
    <property type="project" value="UniProtKB-UniRule"/>
</dbReference>
<dbReference type="FunFam" id="3.30.160.20:FF:000001">
    <property type="entry name" value="30S ribosomal protein S5"/>
    <property type="match status" value="1"/>
</dbReference>
<dbReference type="FunFam" id="3.30.230.10:FF:000002">
    <property type="entry name" value="30S ribosomal protein S5"/>
    <property type="match status" value="1"/>
</dbReference>
<dbReference type="Gene3D" id="3.30.160.20">
    <property type="match status" value="1"/>
</dbReference>
<dbReference type="Gene3D" id="3.30.230.10">
    <property type="match status" value="1"/>
</dbReference>
<dbReference type="HAMAP" id="MF_01307_B">
    <property type="entry name" value="Ribosomal_uS5_B"/>
    <property type="match status" value="1"/>
</dbReference>
<dbReference type="InterPro" id="IPR020568">
    <property type="entry name" value="Ribosomal_Su5_D2-typ_SF"/>
</dbReference>
<dbReference type="InterPro" id="IPR000851">
    <property type="entry name" value="Ribosomal_uS5"/>
</dbReference>
<dbReference type="InterPro" id="IPR005712">
    <property type="entry name" value="Ribosomal_uS5_bac-type"/>
</dbReference>
<dbReference type="InterPro" id="IPR005324">
    <property type="entry name" value="Ribosomal_uS5_C"/>
</dbReference>
<dbReference type="InterPro" id="IPR013810">
    <property type="entry name" value="Ribosomal_uS5_N"/>
</dbReference>
<dbReference type="InterPro" id="IPR018192">
    <property type="entry name" value="Ribosomal_uS5_N_CS"/>
</dbReference>
<dbReference type="InterPro" id="IPR014721">
    <property type="entry name" value="Ribsml_uS5_D2-typ_fold_subgr"/>
</dbReference>
<dbReference type="NCBIfam" id="TIGR01021">
    <property type="entry name" value="rpsE_bact"/>
    <property type="match status" value="1"/>
</dbReference>
<dbReference type="PANTHER" id="PTHR48277">
    <property type="entry name" value="MITOCHONDRIAL RIBOSOMAL PROTEIN S5"/>
    <property type="match status" value="1"/>
</dbReference>
<dbReference type="PANTHER" id="PTHR48277:SF1">
    <property type="entry name" value="MITOCHONDRIAL RIBOSOMAL PROTEIN S5"/>
    <property type="match status" value="1"/>
</dbReference>
<dbReference type="Pfam" id="PF00333">
    <property type="entry name" value="Ribosomal_S5"/>
    <property type="match status" value="1"/>
</dbReference>
<dbReference type="Pfam" id="PF03719">
    <property type="entry name" value="Ribosomal_S5_C"/>
    <property type="match status" value="1"/>
</dbReference>
<dbReference type="SUPFAM" id="SSF54768">
    <property type="entry name" value="dsRNA-binding domain-like"/>
    <property type="match status" value="1"/>
</dbReference>
<dbReference type="SUPFAM" id="SSF54211">
    <property type="entry name" value="Ribosomal protein S5 domain 2-like"/>
    <property type="match status" value="1"/>
</dbReference>
<dbReference type="PROSITE" id="PS00585">
    <property type="entry name" value="RIBOSOMAL_S5"/>
    <property type="match status" value="1"/>
</dbReference>
<dbReference type="PROSITE" id="PS50881">
    <property type="entry name" value="S5_DSRBD"/>
    <property type="match status" value="1"/>
</dbReference>
<feature type="chain" id="PRO_1000086065" description="Small ribosomal subunit protein uS5">
    <location>
        <begin position="1"/>
        <end position="163"/>
    </location>
</feature>
<feature type="domain" description="S5 DRBM" evidence="1">
    <location>
        <begin position="11"/>
        <end position="74"/>
    </location>
</feature>
<evidence type="ECO:0000255" key="1">
    <source>
        <dbReference type="HAMAP-Rule" id="MF_01307"/>
    </source>
</evidence>
<evidence type="ECO:0000305" key="2"/>